<accession>Q5JHF4</accession>
<proteinExistence type="inferred from homology"/>
<organism>
    <name type="scientific">Thermococcus kodakarensis (strain ATCC BAA-918 / JCM 12380 / KOD1)</name>
    <name type="common">Pyrococcus kodakaraensis (strain KOD1)</name>
    <dbReference type="NCBI Taxonomy" id="69014"/>
    <lineage>
        <taxon>Archaea</taxon>
        <taxon>Methanobacteriati</taxon>
        <taxon>Methanobacteriota</taxon>
        <taxon>Thermococci</taxon>
        <taxon>Thermococcales</taxon>
        <taxon>Thermococcaceae</taxon>
        <taxon>Thermococcus</taxon>
    </lineage>
</organism>
<protein>
    <recommendedName>
        <fullName evidence="1">Orotate phosphoribosyltransferase</fullName>
        <shortName evidence="1">OPRT</shortName>
        <shortName evidence="1">OPRTase</shortName>
        <ecNumber evidence="1">2.4.2.10</ecNumber>
    </recommendedName>
</protein>
<name>PYRE_THEKO</name>
<reference key="1">
    <citation type="journal article" date="2005" name="Genome Res.">
        <title>Complete genome sequence of the hyperthermophilic archaeon Thermococcus kodakaraensis KOD1 and comparison with Pyrococcus genomes.</title>
        <authorList>
            <person name="Fukui T."/>
            <person name="Atomi H."/>
            <person name="Kanai T."/>
            <person name="Matsumi R."/>
            <person name="Fujiwara S."/>
            <person name="Imanaka T."/>
        </authorList>
    </citation>
    <scope>NUCLEOTIDE SEQUENCE [LARGE SCALE GENOMIC DNA]</scope>
    <source>
        <strain>ATCC BAA-918 / JCM 12380 / KOD1</strain>
    </source>
</reference>
<dbReference type="EC" id="2.4.2.10" evidence="1"/>
<dbReference type="EMBL" id="AP006878">
    <property type="protein sequence ID" value="BAD86327.1"/>
    <property type="molecule type" value="Genomic_DNA"/>
</dbReference>
<dbReference type="RefSeq" id="WP_011251088.1">
    <property type="nucleotide sequence ID" value="NC_006624.1"/>
</dbReference>
<dbReference type="SMR" id="Q5JHF4"/>
<dbReference type="FunCoup" id="Q5JHF4">
    <property type="interactions" value="100"/>
</dbReference>
<dbReference type="STRING" id="69014.TK2138"/>
<dbReference type="EnsemblBacteria" id="BAD86327">
    <property type="protein sequence ID" value="BAD86327"/>
    <property type="gene ID" value="TK2138"/>
</dbReference>
<dbReference type="GeneID" id="78448675"/>
<dbReference type="KEGG" id="tko:TK2138"/>
<dbReference type="PATRIC" id="fig|69014.16.peg.2094"/>
<dbReference type="eggNOG" id="arCOG00029">
    <property type="taxonomic scope" value="Archaea"/>
</dbReference>
<dbReference type="HOGENOM" id="CLU_074878_2_0_2"/>
<dbReference type="InParanoid" id="Q5JHF4"/>
<dbReference type="OrthoDB" id="9089at2157"/>
<dbReference type="PhylomeDB" id="Q5JHF4"/>
<dbReference type="UniPathway" id="UPA00070">
    <property type="reaction ID" value="UER00119"/>
</dbReference>
<dbReference type="Proteomes" id="UP000000536">
    <property type="component" value="Chromosome"/>
</dbReference>
<dbReference type="GO" id="GO:0000287">
    <property type="term" value="F:magnesium ion binding"/>
    <property type="evidence" value="ECO:0007669"/>
    <property type="project" value="UniProtKB-UniRule"/>
</dbReference>
<dbReference type="GO" id="GO:0004588">
    <property type="term" value="F:orotate phosphoribosyltransferase activity"/>
    <property type="evidence" value="ECO:0000318"/>
    <property type="project" value="GO_Central"/>
</dbReference>
<dbReference type="GO" id="GO:0044205">
    <property type="term" value="P:'de novo' UMP biosynthetic process"/>
    <property type="evidence" value="ECO:0007669"/>
    <property type="project" value="UniProtKB-UniRule"/>
</dbReference>
<dbReference type="GO" id="GO:0019856">
    <property type="term" value="P:pyrimidine nucleobase biosynthetic process"/>
    <property type="evidence" value="ECO:0000318"/>
    <property type="project" value="GO_Central"/>
</dbReference>
<dbReference type="GO" id="GO:0006222">
    <property type="term" value="P:UMP biosynthetic process"/>
    <property type="evidence" value="ECO:0000318"/>
    <property type="project" value="GO_Central"/>
</dbReference>
<dbReference type="CDD" id="cd06223">
    <property type="entry name" value="PRTases_typeI"/>
    <property type="match status" value="1"/>
</dbReference>
<dbReference type="Gene3D" id="3.40.50.2020">
    <property type="match status" value="1"/>
</dbReference>
<dbReference type="HAMAP" id="MF_01208">
    <property type="entry name" value="PyrE"/>
    <property type="match status" value="1"/>
</dbReference>
<dbReference type="InterPro" id="IPR023031">
    <property type="entry name" value="OPRT"/>
</dbReference>
<dbReference type="InterPro" id="IPR004467">
    <property type="entry name" value="Or_phspho_trans_dom"/>
</dbReference>
<dbReference type="InterPro" id="IPR000836">
    <property type="entry name" value="PRibTrfase_dom"/>
</dbReference>
<dbReference type="InterPro" id="IPR029057">
    <property type="entry name" value="PRTase-like"/>
</dbReference>
<dbReference type="NCBIfam" id="TIGR00336">
    <property type="entry name" value="pyrE"/>
    <property type="match status" value="1"/>
</dbReference>
<dbReference type="PANTHER" id="PTHR19278">
    <property type="entry name" value="OROTATE PHOSPHORIBOSYLTRANSFERASE"/>
    <property type="match status" value="1"/>
</dbReference>
<dbReference type="PANTHER" id="PTHR19278:SF9">
    <property type="entry name" value="URIDINE 5'-MONOPHOSPHATE SYNTHASE"/>
    <property type="match status" value="1"/>
</dbReference>
<dbReference type="Pfam" id="PF00156">
    <property type="entry name" value="Pribosyltran"/>
    <property type="match status" value="1"/>
</dbReference>
<dbReference type="SUPFAM" id="SSF53271">
    <property type="entry name" value="PRTase-like"/>
    <property type="match status" value="1"/>
</dbReference>
<comment type="function">
    <text evidence="1">Catalyzes the transfer of a ribosyl phosphate group from 5-phosphoribose 1-diphosphate to orotate, leading to the formation of orotidine monophosphate (OMP).</text>
</comment>
<comment type="catalytic activity">
    <reaction evidence="1">
        <text>orotidine 5'-phosphate + diphosphate = orotate + 5-phospho-alpha-D-ribose 1-diphosphate</text>
        <dbReference type="Rhea" id="RHEA:10380"/>
        <dbReference type="ChEBI" id="CHEBI:30839"/>
        <dbReference type="ChEBI" id="CHEBI:33019"/>
        <dbReference type="ChEBI" id="CHEBI:57538"/>
        <dbReference type="ChEBI" id="CHEBI:58017"/>
        <dbReference type="EC" id="2.4.2.10"/>
    </reaction>
</comment>
<comment type="cofactor">
    <cofactor evidence="1">
        <name>Mg(2+)</name>
        <dbReference type="ChEBI" id="CHEBI:18420"/>
    </cofactor>
</comment>
<comment type="pathway">
    <text evidence="1">Pyrimidine metabolism; UMP biosynthesis via de novo pathway; UMP from orotate: step 1/2.</text>
</comment>
<comment type="subunit">
    <text evidence="1">Homodimer.</text>
</comment>
<comment type="similarity">
    <text evidence="1">Belongs to the purine/pyrimidine phosphoribosyltransferase family. PyrE subfamily.</text>
</comment>
<evidence type="ECO:0000255" key="1">
    <source>
        <dbReference type="HAMAP-Rule" id="MF_01208"/>
    </source>
</evidence>
<gene>
    <name evidence="1" type="primary">pyrE</name>
    <name type="ordered locus">TK2138</name>
</gene>
<feature type="chain" id="PRO_0000110788" description="Orotate phosphoribosyltransferase">
    <location>
        <begin position="1"/>
        <end position="185"/>
    </location>
</feature>
<feature type="binding site" evidence="1">
    <location>
        <position position="94"/>
    </location>
    <ligand>
        <name>5-phospho-alpha-D-ribose 1-diphosphate</name>
        <dbReference type="ChEBI" id="CHEBI:58017"/>
        <note>ligand shared between dimeric partners</note>
    </ligand>
</feature>
<feature type="binding site" description="in other chain" evidence="1">
    <location>
        <position position="95"/>
    </location>
    <ligand>
        <name>5-phospho-alpha-D-ribose 1-diphosphate</name>
        <dbReference type="ChEBI" id="CHEBI:58017"/>
        <note>ligand shared between dimeric partners</note>
    </ligand>
</feature>
<feature type="binding site" evidence="1">
    <location>
        <position position="98"/>
    </location>
    <ligand>
        <name>5-phospho-alpha-D-ribose 1-diphosphate</name>
        <dbReference type="ChEBI" id="CHEBI:58017"/>
        <note>ligand shared between dimeric partners</note>
    </ligand>
</feature>
<feature type="binding site" evidence="1">
    <location>
        <position position="100"/>
    </location>
    <ligand>
        <name>5-phospho-alpha-D-ribose 1-diphosphate</name>
        <dbReference type="ChEBI" id="CHEBI:58017"/>
        <note>ligand shared between dimeric partners</note>
    </ligand>
</feature>
<feature type="binding site" description="in other chain" evidence="1">
    <location>
        <begin position="120"/>
        <end position="128"/>
    </location>
    <ligand>
        <name>5-phospho-alpha-D-ribose 1-diphosphate</name>
        <dbReference type="ChEBI" id="CHEBI:58017"/>
        <note>ligand shared between dimeric partners</note>
    </ligand>
</feature>
<feature type="binding site" evidence="1">
    <location>
        <position position="124"/>
    </location>
    <ligand>
        <name>orotate</name>
        <dbReference type="ChEBI" id="CHEBI:30839"/>
    </ligand>
</feature>
<feature type="binding site" evidence="1">
    <location>
        <position position="152"/>
    </location>
    <ligand>
        <name>orotate</name>
        <dbReference type="ChEBI" id="CHEBI:30839"/>
    </ligand>
</feature>
<keyword id="KW-0328">Glycosyltransferase</keyword>
<keyword id="KW-0460">Magnesium</keyword>
<keyword id="KW-0665">Pyrimidine biosynthesis</keyword>
<keyword id="KW-1185">Reference proteome</keyword>
<keyword id="KW-0808">Transferase</keyword>
<sequence>MSDSKDELIRMFFDEEAILFGRFILTSGKESNYYINVKKLSTKPRALKLIAKLMAGEAQKRGITFDRVAGPELGAVPIATALALETEKPLVIVRKKPKGHGTGSQLEGEVKAGDKVLLVEDVTTTGGSVLRAAEVLEREGAEIAAIMVVVDREEGAEETIGAKYTFLPLVRVSELFARRKEPQKE</sequence>